<reference evidence="5 6" key="1">
    <citation type="journal article" date="2003" name="Genes Cells">
        <title>Negative regulation of Wnt signalling by HMG2L1, a novel NLK-binding protein.</title>
        <authorList>
            <person name="Yamada M."/>
            <person name="Ohkawara B."/>
            <person name="Ichimura N."/>
            <person name="Hyodo-Miura J."/>
            <person name="Urushiyama S."/>
            <person name="Shirakabe K."/>
            <person name="Shibuya H."/>
        </authorList>
    </citation>
    <scope>NUCLEOTIDE SEQUENCE [MRNA]</scope>
    <scope>FUNCTION</scope>
    <scope>INTERACTION WITH NLK.2</scope>
    <scope>DEVELOPMENTAL STAGE</scope>
    <source>
        <tissue evidence="3">Oocyte</tissue>
    </source>
</reference>
<sequence length="554" mass="60910">MSYRDLRECIDLERGTEDVGLAAGRSQREKKRSYKDLLREEEEIAEQVRKSSKKRSKELDLFSGNELHKKKKKHSSDDYHADHSTDSAKKKKKTSLPSPSSSDTAMDLLKAITSPQADTSTTHPSKKPEKILATPISFSSPSQPPHKDYHKKSGEVSGDDSSHRSKKSKPLTLREPDGLRMKLIMSPNEKSEEEAVSPQGGPGHSDSASSKKNSKKLGREEIESRSSHKKHKKQSYTPRSGGTPDSASSTGGELDAGELVIDDSLRDMKKKKKSKKSKKKKDKHKDEKHKKHSKSKREHEVEQSQTQIASPGLPSPPPPPATTPPTSPPSIPLQPQALVTHTEEQSDKKKKKEDPEKPKKKNMSAYQVFSKEYRVSIIAEHPGIDFGELSKKLAEVWKQLPEKDKLVWKQKAQYLQHKQNKAEATTVKRKSSSSESAPKSKGSSSGLVSPNKKSPTSSVASFSTSPAKVPDTEPIDVAAHLQLLGESLSLIGHRLQETEGMVAVSGSLSVLLDSILCALGPLVCLTSHVPQLNACPKQILSNTLDNIAYVMPGL</sequence>
<comment type="function">
    <text evidence="3">Negatively regulates Wnt/beta-catenin signaling during development.</text>
</comment>
<comment type="subunit">
    <text evidence="3">Interacts with nlk.2.</text>
</comment>
<comment type="subcellular location">
    <subcellularLocation>
        <location evidence="1">Nucleus</location>
    </subcellularLocation>
</comment>
<comment type="developmental stage">
    <text evidence="3">Expressed both maternally and zygotically. Widely expressed at the early gastrula stage. Expressed throughout early embryogenesis until at least the tadpole stage.</text>
</comment>
<protein>
    <recommendedName>
        <fullName>HMG box-containing protein 4</fullName>
    </recommendedName>
    <alternativeName>
        <fullName evidence="4">High mobility group protein 2-like 1</fullName>
        <shortName evidence="4">xHMG2L1</shortName>
    </alternativeName>
</protein>
<accession>Q6WKW9</accession>
<dbReference type="EMBL" id="AY281348">
    <property type="protein sequence ID" value="AAP92714.1"/>
    <property type="molecule type" value="mRNA"/>
</dbReference>
<dbReference type="RefSeq" id="NP_001082746.1">
    <property type="nucleotide sequence ID" value="NM_001089277.1"/>
</dbReference>
<dbReference type="SMR" id="Q6WKW9"/>
<dbReference type="GeneID" id="398700"/>
<dbReference type="KEGG" id="xla:398700"/>
<dbReference type="CTD" id="398700"/>
<dbReference type="OrthoDB" id="4777606at2759"/>
<dbReference type="Proteomes" id="UP000186698">
    <property type="component" value="Chromosome 4S"/>
</dbReference>
<dbReference type="Bgee" id="398700">
    <property type="expression patterns" value="Expressed in egg cell and 19 other cell types or tissues"/>
</dbReference>
<dbReference type="GO" id="GO:0005634">
    <property type="term" value="C:nucleus"/>
    <property type="evidence" value="ECO:0007669"/>
    <property type="project" value="UniProtKB-SubCell"/>
</dbReference>
<dbReference type="GO" id="GO:0003677">
    <property type="term" value="F:DNA binding"/>
    <property type="evidence" value="ECO:0007669"/>
    <property type="project" value="UniProtKB-KW"/>
</dbReference>
<dbReference type="GO" id="GO:0019901">
    <property type="term" value="F:protein kinase binding"/>
    <property type="evidence" value="ECO:0000353"/>
    <property type="project" value="UniProtKB"/>
</dbReference>
<dbReference type="GO" id="GO:0030178">
    <property type="term" value="P:negative regulation of Wnt signaling pathway"/>
    <property type="evidence" value="ECO:0000315"/>
    <property type="project" value="UniProtKB"/>
</dbReference>
<dbReference type="GO" id="GO:0016055">
    <property type="term" value="P:Wnt signaling pathway"/>
    <property type="evidence" value="ECO:0007669"/>
    <property type="project" value="UniProtKB-KW"/>
</dbReference>
<dbReference type="CDD" id="cd21982">
    <property type="entry name" value="HMG-box_HMGXB4"/>
    <property type="match status" value="1"/>
</dbReference>
<dbReference type="FunFam" id="1.10.30.10:FF:000030">
    <property type="entry name" value="HMG domain-containing protein 4 isoform X1"/>
    <property type="match status" value="1"/>
</dbReference>
<dbReference type="Gene3D" id="1.10.30.10">
    <property type="entry name" value="High mobility group box domain"/>
    <property type="match status" value="1"/>
</dbReference>
<dbReference type="InterPro" id="IPR025228">
    <property type="entry name" value="DUF4171"/>
</dbReference>
<dbReference type="InterPro" id="IPR009071">
    <property type="entry name" value="HMG_box_dom"/>
</dbReference>
<dbReference type="InterPro" id="IPR036910">
    <property type="entry name" value="HMG_box_dom_sf"/>
</dbReference>
<dbReference type="InterPro" id="IPR042477">
    <property type="entry name" value="HMGXB4"/>
</dbReference>
<dbReference type="InterPro" id="IPR048016">
    <property type="entry name" value="HMGXB4_HMG-box"/>
</dbReference>
<dbReference type="PANTHER" id="PTHR46584">
    <property type="entry name" value="HMG DOMAIN-CONTAINING PROTEIN 4"/>
    <property type="match status" value="1"/>
</dbReference>
<dbReference type="PANTHER" id="PTHR46584:SF1">
    <property type="entry name" value="HMG DOMAIN-CONTAINING PROTEIN 4"/>
    <property type="match status" value="1"/>
</dbReference>
<dbReference type="Pfam" id="PF13775">
    <property type="entry name" value="DUF4171"/>
    <property type="match status" value="1"/>
</dbReference>
<dbReference type="Pfam" id="PF00505">
    <property type="entry name" value="HMG_box"/>
    <property type="match status" value="1"/>
</dbReference>
<dbReference type="PRINTS" id="PR00886">
    <property type="entry name" value="HIGHMOBLTY12"/>
</dbReference>
<dbReference type="SMART" id="SM00398">
    <property type="entry name" value="HMG"/>
    <property type="match status" value="1"/>
</dbReference>
<dbReference type="SUPFAM" id="SSF47095">
    <property type="entry name" value="HMG-box"/>
    <property type="match status" value="1"/>
</dbReference>
<dbReference type="PROSITE" id="PS50118">
    <property type="entry name" value="HMG_BOX_2"/>
    <property type="match status" value="1"/>
</dbReference>
<evidence type="ECO:0000255" key="1">
    <source>
        <dbReference type="PROSITE-ProRule" id="PRU00267"/>
    </source>
</evidence>
<evidence type="ECO:0000256" key="2">
    <source>
        <dbReference type="SAM" id="MobiDB-lite"/>
    </source>
</evidence>
<evidence type="ECO:0000269" key="3">
    <source>
    </source>
</evidence>
<evidence type="ECO:0000303" key="4">
    <source>
    </source>
</evidence>
<evidence type="ECO:0000305" key="5"/>
<evidence type="ECO:0000312" key="6">
    <source>
        <dbReference type="EMBL" id="AAP92714.1"/>
    </source>
</evidence>
<name>HMGX4_XENLA</name>
<gene>
    <name type="primary">hmgxb4</name>
    <name evidence="6" type="synonym">hmg2l1</name>
</gene>
<organism>
    <name type="scientific">Xenopus laevis</name>
    <name type="common">African clawed frog</name>
    <dbReference type="NCBI Taxonomy" id="8355"/>
    <lineage>
        <taxon>Eukaryota</taxon>
        <taxon>Metazoa</taxon>
        <taxon>Chordata</taxon>
        <taxon>Craniata</taxon>
        <taxon>Vertebrata</taxon>
        <taxon>Euteleostomi</taxon>
        <taxon>Amphibia</taxon>
        <taxon>Batrachia</taxon>
        <taxon>Anura</taxon>
        <taxon>Pipoidea</taxon>
        <taxon>Pipidae</taxon>
        <taxon>Xenopodinae</taxon>
        <taxon>Xenopus</taxon>
        <taxon>Xenopus</taxon>
    </lineage>
</organism>
<feature type="chain" id="PRO_0000370233" description="HMG box-containing protein 4">
    <location>
        <begin position="1"/>
        <end position="554"/>
    </location>
</feature>
<feature type="DNA-binding region" description="HMG box" evidence="1">
    <location>
        <begin position="359"/>
        <end position="427"/>
    </location>
</feature>
<feature type="region of interest" description="Disordered" evidence="2">
    <location>
        <begin position="15"/>
        <end position="368"/>
    </location>
</feature>
<feature type="region of interest" description="Disordered" evidence="2">
    <location>
        <begin position="417"/>
        <end position="469"/>
    </location>
</feature>
<feature type="compositionally biased region" description="Basic and acidic residues" evidence="2">
    <location>
        <begin position="75"/>
        <end position="88"/>
    </location>
</feature>
<feature type="compositionally biased region" description="Low complexity" evidence="2">
    <location>
        <begin position="95"/>
        <end position="105"/>
    </location>
</feature>
<feature type="compositionally biased region" description="Polar residues" evidence="2">
    <location>
        <begin position="113"/>
        <end position="123"/>
    </location>
</feature>
<feature type="compositionally biased region" description="Basic and acidic residues" evidence="2">
    <location>
        <begin position="145"/>
        <end position="154"/>
    </location>
</feature>
<feature type="compositionally biased region" description="Basic and acidic residues" evidence="2">
    <location>
        <begin position="217"/>
        <end position="226"/>
    </location>
</feature>
<feature type="compositionally biased region" description="Polar residues" evidence="2">
    <location>
        <begin position="236"/>
        <end position="251"/>
    </location>
</feature>
<feature type="compositionally biased region" description="Basic residues" evidence="2">
    <location>
        <begin position="268"/>
        <end position="296"/>
    </location>
</feature>
<feature type="compositionally biased region" description="Pro residues" evidence="2">
    <location>
        <begin position="313"/>
        <end position="332"/>
    </location>
</feature>
<feature type="compositionally biased region" description="Basic and acidic residues" evidence="2">
    <location>
        <begin position="341"/>
        <end position="357"/>
    </location>
</feature>
<feature type="compositionally biased region" description="Low complexity" evidence="2">
    <location>
        <begin position="433"/>
        <end position="445"/>
    </location>
</feature>
<feature type="compositionally biased region" description="Low complexity" evidence="2">
    <location>
        <begin position="454"/>
        <end position="467"/>
    </location>
</feature>
<keyword id="KW-0217">Developmental protein</keyword>
<keyword id="KW-0238">DNA-binding</keyword>
<keyword id="KW-0539">Nucleus</keyword>
<keyword id="KW-1185">Reference proteome</keyword>
<keyword id="KW-0879">Wnt signaling pathway</keyword>
<proteinExistence type="evidence at protein level"/>